<feature type="chain" id="PRO_1000013444" description="Large ribosomal subunit protein bL34">
    <location>
        <begin position="1"/>
        <end position="45"/>
    </location>
</feature>
<feature type="region of interest" description="Disordered" evidence="2">
    <location>
        <begin position="1"/>
        <end position="21"/>
    </location>
</feature>
<feature type="compositionally biased region" description="Polar residues" evidence="2">
    <location>
        <begin position="1"/>
        <end position="10"/>
    </location>
</feature>
<feature type="compositionally biased region" description="Basic residues" evidence="2">
    <location>
        <begin position="11"/>
        <end position="20"/>
    </location>
</feature>
<comment type="similarity">
    <text evidence="1">Belongs to the bacterial ribosomal protein bL34 family.</text>
</comment>
<protein>
    <recommendedName>
        <fullName evidence="1">Large ribosomal subunit protein bL34</fullName>
    </recommendedName>
    <alternativeName>
        <fullName evidence="3">50S ribosomal protein L34</fullName>
    </alternativeName>
</protein>
<gene>
    <name evidence="1" type="primary">rpmH</name>
    <name type="ordered locus">Shewmr4_3943</name>
</gene>
<organism>
    <name type="scientific">Shewanella sp. (strain MR-4)</name>
    <dbReference type="NCBI Taxonomy" id="60480"/>
    <lineage>
        <taxon>Bacteria</taxon>
        <taxon>Pseudomonadati</taxon>
        <taxon>Pseudomonadota</taxon>
        <taxon>Gammaproteobacteria</taxon>
        <taxon>Alteromonadales</taxon>
        <taxon>Shewanellaceae</taxon>
        <taxon>Shewanella</taxon>
    </lineage>
</organism>
<dbReference type="EMBL" id="CP000446">
    <property type="protein sequence ID" value="ABI41006.1"/>
    <property type="molecule type" value="Genomic_DNA"/>
</dbReference>
<dbReference type="RefSeq" id="WP_006083827.1">
    <property type="nucleotide sequence ID" value="NC_008321.1"/>
</dbReference>
<dbReference type="SMR" id="Q0HD61"/>
<dbReference type="GeneID" id="90572020"/>
<dbReference type="KEGG" id="she:Shewmr4_3943"/>
<dbReference type="HOGENOM" id="CLU_129938_2_0_6"/>
<dbReference type="GO" id="GO:1990904">
    <property type="term" value="C:ribonucleoprotein complex"/>
    <property type="evidence" value="ECO:0007669"/>
    <property type="project" value="UniProtKB-KW"/>
</dbReference>
<dbReference type="GO" id="GO:0005840">
    <property type="term" value="C:ribosome"/>
    <property type="evidence" value="ECO:0007669"/>
    <property type="project" value="UniProtKB-KW"/>
</dbReference>
<dbReference type="GO" id="GO:0003735">
    <property type="term" value="F:structural constituent of ribosome"/>
    <property type="evidence" value="ECO:0007669"/>
    <property type="project" value="InterPro"/>
</dbReference>
<dbReference type="GO" id="GO:0006412">
    <property type="term" value="P:translation"/>
    <property type="evidence" value="ECO:0007669"/>
    <property type="project" value="UniProtKB-UniRule"/>
</dbReference>
<dbReference type="FunFam" id="1.10.287.3980:FF:000001">
    <property type="entry name" value="Mitochondrial ribosomal protein L34"/>
    <property type="match status" value="1"/>
</dbReference>
<dbReference type="Gene3D" id="1.10.287.3980">
    <property type="match status" value="1"/>
</dbReference>
<dbReference type="HAMAP" id="MF_00391">
    <property type="entry name" value="Ribosomal_bL34"/>
    <property type="match status" value="1"/>
</dbReference>
<dbReference type="InterPro" id="IPR000271">
    <property type="entry name" value="Ribosomal_bL34"/>
</dbReference>
<dbReference type="InterPro" id="IPR020939">
    <property type="entry name" value="Ribosomal_bL34_CS"/>
</dbReference>
<dbReference type="NCBIfam" id="TIGR01030">
    <property type="entry name" value="rpmH_bact"/>
    <property type="match status" value="1"/>
</dbReference>
<dbReference type="PANTHER" id="PTHR14503:SF4">
    <property type="entry name" value="LARGE RIBOSOMAL SUBUNIT PROTEIN BL34M"/>
    <property type="match status" value="1"/>
</dbReference>
<dbReference type="PANTHER" id="PTHR14503">
    <property type="entry name" value="MITOCHONDRIAL RIBOSOMAL PROTEIN 34 FAMILY MEMBER"/>
    <property type="match status" value="1"/>
</dbReference>
<dbReference type="Pfam" id="PF00468">
    <property type="entry name" value="Ribosomal_L34"/>
    <property type="match status" value="1"/>
</dbReference>
<dbReference type="PROSITE" id="PS00784">
    <property type="entry name" value="RIBOSOMAL_L34"/>
    <property type="match status" value="1"/>
</dbReference>
<keyword id="KW-0687">Ribonucleoprotein</keyword>
<keyword id="KW-0689">Ribosomal protein</keyword>
<sequence>MSKRTFQPSNLKRKRSHGFRARMATVGGRKVLARRRAKGRARLSA</sequence>
<accession>Q0HD61</accession>
<proteinExistence type="inferred from homology"/>
<name>RL34_SHESM</name>
<evidence type="ECO:0000255" key="1">
    <source>
        <dbReference type="HAMAP-Rule" id="MF_00391"/>
    </source>
</evidence>
<evidence type="ECO:0000256" key="2">
    <source>
        <dbReference type="SAM" id="MobiDB-lite"/>
    </source>
</evidence>
<evidence type="ECO:0000305" key="3"/>
<reference key="1">
    <citation type="submission" date="2006-08" db="EMBL/GenBank/DDBJ databases">
        <title>Complete sequence of Shewanella sp. MR-4.</title>
        <authorList>
            <consortium name="US DOE Joint Genome Institute"/>
            <person name="Copeland A."/>
            <person name="Lucas S."/>
            <person name="Lapidus A."/>
            <person name="Barry K."/>
            <person name="Detter J.C."/>
            <person name="Glavina del Rio T."/>
            <person name="Hammon N."/>
            <person name="Israni S."/>
            <person name="Dalin E."/>
            <person name="Tice H."/>
            <person name="Pitluck S."/>
            <person name="Kiss H."/>
            <person name="Brettin T."/>
            <person name="Bruce D."/>
            <person name="Han C."/>
            <person name="Tapia R."/>
            <person name="Gilna P."/>
            <person name="Schmutz J."/>
            <person name="Larimer F."/>
            <person name="Land M."/>
            <person name="Hauser L."/>
            <person name="Kyrpides N."/>
            <person name="Mikhailova N."/>
            <person name="Nealson K."/>
            <person name="Konstantinidis K."/>
            <person name="Klappenbach J."/>
            <person name="Tiedje J."/>
            <person name="Richardson P."/>
        </authorList>
    </citation>
    <scope>NUCLEOTIDE SEQUENCE [LARGE SCALE GENOMIC DNA]</scope>
    <source>
        <strain>MR-4</strain>
    </source>
</reference>